<sequence>MKTSLFKSLYFQVLTAIAIGILLGHYYPELGAQMKPLGDAFVKLIKMIIAPVIFCTVVTGIAGMESMKAVGRTGAVALLYFEIVSTIALIIGLIIVNVVQPGAGMNVDPATLDAQAVAVYAAQAKEQGIIAFLMDVIPGSVIGAFASGNILQVLLFAVLFGFALHRLGSKGQLIFNVIESFSQVIFGIINMIMRLAPIGAFGAMAFTIGKYGVGSLVQLGQLIICFYITCILFVVVVLGTIARVTGFSIFKFIRYIREELLIVLGTSSSESALPRMLDKMEKLGCRKSVVGLVIPTGYSFNLDGTSIYLTMAAVFIAQATNSHMDIFHQITLLVVLLLSSKGAAGVTGSGFIVLAATISAVGHLPVAGLALILGIDRFMSEARALTNLVGNGVATVVVAKWVKELDHQKLDDVLNNRAPDGKTHEISS</sequence>
<proteinExistence type="inferred from homology"/>
<feature type="chain" id="PRO_1000140463" description="C4-dicarboxylate transport protein">
    <location>
        <begin position="1"/>
        <end position="428"/>
    </location>
</feature>
<feature type="transmembrane region" description="Helical" evidence="1">
    <location>
        <begin position="4"/>
        <end position="24"/>
    </location>
</feature>
<feature type="transmembrane region" description="Helical" evidence="1">
    <location>
        <begin position="44"/>
        <end position="64"/>
    </location>
</feature>
<feature type="transmembrane region" description="Helical" evidence="1">
    <location>
        <begin position="76"/>
        <end position="96"/>
    </location>
</feature>
<feature type="transmembrane region" description="Helical" evidence="1">
    <location>
        <begin position="142"/>
        <end position="162"/>
    </location>
</feature>
<feature type="transmembrane region" description="Helical" evidence="1">
    <location>
        <begin position="184"/>
        <end position="204"/>
    </location>
</feature>
<feature type="transmembrane region" description="Helical" evidence="1">
    <location>
        <begin position="222"/>
        <end position="242"/>
    </location>
</feature>
<feature type="transmembrane region" description="Helical" evidence="1">
    <location>
        <begin position="289"/>
        <end position="309"/>
    </location>
</feature>
<feature type="transmembrane region" description="Helical" evidence="1">
    <location>
        <begin position="326"/>
        <end position="346"/>
    </location>
</feature>
<feature type="transmembrane region" description="Helical" evidence="1">
    <location>
        <begin position="352"/>
        <end position="372"/>
    </location>
</feature>
<accession>B5F9I1</accession>
<reference key="1">
    <citation type="journal article" date="2011" name="J. Bacteriol.">
        <title>Comparative genomics of 28 Salmonella enterica isolates: evidence for CRISPR-mediated adaptive sublineage evolution.</title>
        <authorList>
            <person name="Fricke W.F."/>
            <person name="Mammel M.K."/>
            <person name="McDermott P.F."/>
            <person name="Tartera C."/>
            <person name="White D.G."/>
            <person name="Leclerc J.E."/>
            <person name="Ravel J."/>
            <person name="Cebula T.A."/>
        </authorList>
    </citation>
    <scope>NUCLEOTIDE SEQUENCE [LARGE SCALE GENOMIC DNA]</scope>
    <source>
        <strain>SL483</strain>
    </source>
</reference>
<dbReference type="EMBL" id="CP001138">
    <property type="protein sequence ID" value="ACH50068.1"/>
    <property type="molecule type" value="Genomic_DNA"/>
</dbReference>
<dbReference type="RefSeq" id="WP_000858228.1">
    <property type="nucleotide sequence ID" value="NC_011149.1"/>
</dbReference>
<dbReference type="SMR" id="B5F9I1"/>
<dbReference type="KEGG" id="sea:SeAg_B3822"/>
<dbReference type="HOGENOM" id="CLU_019375_7_0_6"/>
<dbReference type="Proteomes" id="UP000008819">
    <property type="component" value="Chromosome"/>
</dbReference>
<dbReference type="GO" id="GO:0005886">
    <property type="term" value="C:plasma membrane"/>
    <property type="evidence" value="ECO:0007669"/>
    <property type="project" value="UniProtKB-SubCell"/>
</dbReference>
<dbReference type="GO" id="GO:0015138">
    <property type="term" value="F:fumarate transmembrane transporter activity"/>
    <property type="evidence" value="ECO:0007669"/>
    <property type="project" value="TreeGrafter"/>
</dbReference>
<dbReference type="GO" id="GO:0015366">
    <property type="term" value="F:malate:proton symporter activity"/>
    <property type="evidence" value="ECO:0007669"/>
    <property type="project" value="TreeGrafter"/>
</dbReference>
<dbReference type="GO" id="GO:0015141">
    <property type="term" value="F:succinate transmembrane transporter activity"/>
    <property type="evidence" value="ECO:0007669"/>
    <property type="project" value="TreeGrafter"/>
</dbReference>
<dbReference type="GO" id="GO:0070778">
    <property type="term" value="P:L-aspartate transmembrane transport"/>
    <property type="evidence" value="ECO:0007669"/>
    <property type="project" value="TreeGrafter"/>
</dbReference>
<dbReference type="FunFam" id="1.10.3860.10:FF:000001">
    <property type="entry name" value="C4-dicarboxylate transport protein"/>
    <property type="match status" value="1"/>
</dbReference>
<dbReference type="Gene3D" id="1.10.3860.10">
    <property type="entry name" value="Sodium:dicarboxylate symporter"/>
    <property type="match status" value="1"/>
</dbReference>
<dbReference type="HAMAP" id="MF_01300">
    <property type="entry name" value="C4_dicarb_transport"/>
    <property type="match status" value="1"/>
</dbReference>
<dbReference type="InterPro" id="IPR023954">
    <property type="entry name" value="C4_dicarb_transport"/>
</dbReference>
<dbReference type="InterPro" id="IPR001991">
    <property type="entry name" value="Na-dicarboxylate_symporter"/>
</dbReference>
<dbReference type="InterPro" id="IPR018107">
    <property type="entry name" value="Na-dicarboxylate_symporter_CS"/>
</dbReference>
<dbReference type="InterPro" id="IPR036458">
    <property type="entry name" value="Na:dicarbo_symporter_sf"/>
</dbReference>
<dbReference type="NCBIfam" id="NF002461">
    <property type="entry name" value="PRK01663.1"/>
    <property type="match status" value="1"/>
</dbReference>
<dbReference type="NCBIfam" id="NF009587">
    <property type="entry name" value="PRK13027.1"/>
    <property type="match status" value="1"/>
</dbReference>
<dbReference type="PANTHER" id="PTHR42865:SF1">
    <property type="entry name" value="AEROBIC C4-DICARBOXYLATE TRANSPORT PROTEIN"/>
    <property type="match status" value="1"/>
</dbReference>
<dbReference type="PANTHER" id="PTHR42865">
    <property type="entry name" value="PROTON/GLUTAMATE-ASPARTATE SYMPORTER"/>
    <property type="match status" value="1"/>
</dbReference>
<dbReference type="Pfam" id="PF00375">
    <property type="entry name" value="SDF"/>
    <property type="match status" value="1"/>
</dbReference>
<dbReference type="PRINTS" id="PR00173">
    <property type="entry name" value="EDTRNSPORT"/>
</dbReference>
<dbReference type="SUPFAM" id="SSF118215">
    <property type="entry name" value="Proton glutamate symport protein"/>
    <property type="match status" value="1"/>
</dbReference>
<dbReference type="PROSITE" id="PS00713">
    <property type="entry name" value="NA_DICARBOXYL_SYMP_1"/>
    <property type="match status" value="1"/>
</dbReference>
<dbReference type="PROSITE" id="PS00714">
    <property type="entry name" value="NA_DICARBOXYL_SYMP_2"/>
    <property type="match status" value="1"/>
</dbReference>
<organism>
    <name type="scientific">Salmonella agona (strain SL483)</name>
    <dbReference type="NCBI Taxonomy" id="454166"/>
    <lineage>
        <taxon>Bacteria</taxon>
        <taxon>Pseudomonadati</taxon>
        <taxon>Pseudomonadota</taxon>
        <taxon>Gammaproteobacteria</taxon>
        <taxon>Enterobacterales</taxon>
        <taxon>Enterobacteriaceae</taxon>
        <taxon>Salmonella</taxon>
    </lineage>
</organism>
<name>DCTA_SALA4</name>
<comment type="function">
    <text evidence="1">Responsible for the transport of dicarboxylates such as succinate, fumarate, and malate from the periplasm across the membrane.</text>
</comment>
<comment type="subcellular location">
    <subcellularLocation>
        <location evidence="1">Cell inner membrane</location>
        <topology evidence="1">Multi-pass membrane protein</topology>
    </subcellularLocation>
</comment>
<comment type="similarity">
    <text evidence="1">Belongs to the dicarboxylate/amino acid:cation symporter (DAACS) (TC 2.A.23) family.</text>
</comment>
<gene>
    <name evidence="1" type="primary">dctA</name>
    <name type="ordered locus">SeAg_B3822</name>
</gene>
<evidence type="ECO:0000255" key="1">
    <source>
        <dbReference type="HAMAP-Rule" id="MF_01300"/>
    </source>
</evidence>
<protein>
    <recommendedName>
        <fullName evidence="1">C4-dicarboxylate transport protein</fullName>
    </recommendedName>
</protein>
<keyword id="KW-0997">Cell inner membrane</keyword>
<keyword id="KW-1003">Cell membrane</keyword>
<keyword id="KW-0472">Membrane</keyword>
<keyword id="KW-0769">Symport</keyword>
<keyword id="KW-0812">Transmembrane</keyword>
<keyword id="KW-1133">Transmembrane helix</keyword>
<keyword id="KW-0813">Transport</keyword>